<comment type="function">
    <text evidence="1">Catalyzes the transfer of the methyl group from monomethylamine to the corrinoid cofactor of MtmC.</text>
</comment>
<comment type="catalytic activity">
    <reaction>
        <text>Co(I)-[methylamine-specific corrinoid protein] + methylamine + H(+) = methyl-Co(III)-[methylamine-specific corrinoid protein] + NH4(+)</text>
        <dbReference type="Rhea" id="RHEA:26059"/>
        <dbReference type="Rhea" id="RHEA-COMP:11120"/>
        <dbReference type="Rhea" id="RHEA-COMP:11121"/>
        <dbReference type="ChEBI" id="CHEBI:15378"/>
        <dbReference type="ChEBI" id="CHEBI:28938"/>
        <dbReference type="ChEBI" id="CHEBI:59338"/>
        <dbReference type="ChEBI" id="CHEBI:85033"/>
        <dbReference type="ChEBI" id="CHEBI:85035"/>
        <dbReference type="EC" id="2.1.1.248"/>
    </reaction>
</comment>
<comment type="pathway">
    <text>One-carbon metabolism; methanogenesis from methylamine.</text>
</comment>
<comment type="subunit">
    <text evidence="1">Can form a complex with MtmC.</text>
</comment>
<comment type="similarity">
    <text evidence="2">Belongs to the monomethylamine methyltransferase family.</text>
</comment>
<name>MTMB1_METAC</name>
<sequence length="458" mass="50378">MTFRKSFDCYDFYDRAKVGEKCTQDDWDLMKIPMKAMELKQKYGLDFKGEFVPTDRDMMEKLFQAGFEMLLECGIYCTDTHRIVKYTEDEIWDAINNVQKEFTLGTGRDAVNVRKRSVGDKRKPIVQGGPTGSPISEDVFMPVHMSYALEKEVDTIVDGVMTSVRGKPPVPKSPYEVLAAKTEARLIKQACAMAGRPGMGIOGPETSLSAQGNISSDCVGGQISSDSHEVSQLNELKIDLDAIAVIAHYKGNSDIIMDEQMPIFGGYAGGIEETTIVDVATHINAFVMSSASWHLDGPVHIRWGSTNTRETLTIAGWACATISEFTDILSGNQYYPCAGPCTEMCLLEASAQSITDTASGREILSGVASAKGVVTDKTTGMEARMMGEVARATAGVEISEINKILDKLVALYEKNYANAPAGKTFQECYDVKTVTPTEEYMHVYDGARKKLEDLGLVF</sequence>
<accession>P58865</accession>
<protein>
    <recommendedName>
        <fullName>Monomethylamine methyltransferase MtmB1</fullName>
        <shortName>MMA methyltransferase 1</shortName>
        <shortName>MMAMT 1</shortName>
        <ecNumber>2.1.1.248</ecNumber>
    </recommendedName>
</protein>
<keyword id="KW-0484">Methanogenesis</keyword>
<keyword id="KW-0489">Methyltransferase</keyword>
<keyword id="KW-0669">Pyrrolysine</keyword>
<keyword id="KW-1185">Reference proteome</keyword>
<keyword id="KW-0808">Transferase</keyword>
<dbReference type="EC" id="2.1.1.248"/>
<dbReference type="EMBL" id="AE010299">
    <property type="protein sequence ID" value="AAM03597.1"/>
    <property type="molecule type" value="Genomic_DNA"/>
</dbReference>
<dbReference type="STRING" id="188937.MA_0144"/>
<dbReference type="KEGG" id="mac:MA_0144"/>
<dbReference type="HOGENOM" id="CLU_047925_0_0_2"/>
<dbReference type="InParanoid" id="P58865"/>
<dbReference type="UniPathway" id="UPA00643"/>
<dbReference type="Proteomes" id="UP000002487">
    <property type="component" value="Chromosome"/>
</dbReference>
<dbReference type="GO" id="GO:0043852">
    <property type="term" value="F:monomethylamine methyltransferase activity"/>
    <property type="evidence" value="ECO:0007669"/>
    <property type="project" value="UniProtKB-EC"/>
</dbReference>
<dbReference type="GO" id="GO:0015948">
    <property type="term" value="P:methanogenesis"/>
    <property type="evidence" value="ECO:0007669"/>
    <property type="project" value="UniProtKB-KW"/>
</dbReference>
<dbReference type="GO" id="GO:0032259">
    <property type="term" value="P:methylation"/>
    <property type="evidence" value="ECO:0007669"/>
    <property type="project" value="UniProtKB-KW"/>
</dbReference>
<dbReference type="FunFam" id="3.20.20.460:FF:000001">
    <property type="entry name" value="Monomethylamine methyltransferase MtmB1"/>
    <property type="match status" value="1"/>
</dbReference>
<dbReference type="Gene3D" id="3.20.20.460">
    <property type="entry name" value="Monomethylamine methyltransferase MtmB"/>
    <property type="match status" value="1"/>
</dbReference>
<dbReference type="InterPro" id="IPR008031">
    <property type="entry name" value="MtmB_MeTrfase"/>
</dbReference>
<dbReference type="InterPro" id="IPR036655">
    <property type="entry name" value="MtmB_sf"/>
</dbReference>
<dbReference type="Pfam" id="PF05369">
    <property type="entry name" value="MtmB"/>
    <property type="match status" value="1"/>
</dbReference>
<dbReference type="SUPFAM" id="SSF75098">
    <property type="entry name" value="Monomethylamine methyltransferase MtmB"/>
    <property type="match status" value="1"/>
</dbReference>
<evidence type="ECO:0000250" key="1"/>
<evidence type="ECO:0000305" key="2"/>
<reference key="1">
    <citation type="journal article" date="2002" name="Genome Res.">
        <title>The genome of Methanosarcina acetivorans reveals extensive metabolic and physiological diversity.</title>
        <authorList>
            <person name="Galagan J.E."/>
            <person name="Nusbaum C."/>
            <person name="Roy A."/>
            <person name="Endrizzi M.G."/>
            <person name="Macdonald P."/>
            <person name="FitzHugh W."/>
            <person name="Calvo S."/>
            <person name="Engels R."/>
            <person name="Smirnov S."/>
            <person name="Atnoor D."/>
            <person name="Brown A."/>
            <person name="Allen N."/>
            <person name="Naylor J."/>
            <person name="Stange-Thomann N."/>
            <person name="DeArellano K."/>
            <person name="Johnson R."/>
            <person name="Linton L."/>
            <person name="McEwan P."/>
            <person name="McKernan K."/>
            <person name="Talamas J."/>
            <person name="Tirrell A."/>
            <person name="Ye W."/>
            <person name="Zimmer A."/>
            <person name="Barber R.D."/>
            <person name="Cann I."/>
            <person name="Graham D.E."/>
            <person name="Grahame D.A."/>
            <person name="Guss A.M."/>
            <person name="Hedderich R."/>
            <person name="Ingram-Smith C."/>
            <person name="Kuettner H.C."/>
            <person name="Krzycki J.A."/>
            <person name="Leigh J.A."/>
            <person name="Li W."/>
            <person name="Liu J."/>
            <person name="Mukhopadhyay B."/>
            <person name="Reeve J.N."/>
            <person name="Smith K."/>
            <person name="Springer T.A."/>
            <person name="Umayam L.A."/>
            <person name="White O."/>
            <person name="White R.H."/>
            <person name="de Macario E.C."/>
            <person name="Ferry J.G."/>
            <person name="Jarrell K.F."/>
            <person name="Jing H."/>
            <person name="Macario A.J.L."/>
            <person name="Paulsen I.T."/>
            <person name="Pritchett M."/>
            <person name="Sowers K.R."/>
            <person name="Swanson R.V."/>
            <person name="Zinder S.H."/>
            <person name="Lander E."/>
            <person name="Metcalf W.W."/>
            <person name="Birren B."/>
        </authorList>
    </citation>
    <scope>NUCLEOTIDE SEQUENCE [LARGE SCALE GENOMIC DNA]</scope>
    <source>
        <strain>ATCC 35395 / DSM 2834 / JCM 12185 / C2A</strain>
    </source>
</reference>
<feature type="initiator methionine" description="Removed" evidence="1">
    <location>
        <position position="1"/>
    </location>
</feature>
<feature type="chain" id="PRO_0000216555" description="Monomethylamine methyltransferase MtmB1">
    <location>
        <begin position="2"/>
        <end position="458"/>
    </location>
</feature>
<feature type="non-standard amino acid" description="Pyrrolysine" evidence="1">
    <location>
        <position position="202"/>
    </location>
</feature>
<organism>
    <name type="scientific">Methanosarcina acetivorans (strain ATCC 35395 / DSM 2834 / JCM 12185 / C2A)</name>
    <dbReference type="NCBI Taxonomy" id="188937"/>
    <lineage>
        <taxon>Archaea</taxon>
        <taxon>Methanobacteriati</taxon>
        <taxon>Methanobacteriota</taxon>
        <taxon>Stenosarchaea group</taxon>
        <taxon>Methanomicrobia</taxon>
        <taxon>Methanosarcinales</taxon>
        <taxon>Methanosarcinaceae</taxon>
        <taxon>Methanosarcina</taxon>
    </lineage>
</organism>
<gene>
    <name type="primary">mtmB1</name>
    <name type="ordered locus">MA_0144</name>
</gene>
<proteinExistence type="inferred from homology"/>